<keyword id="KW-0053">Apoptosis</keyword>
<keyword id="KW-0227">DNA damage</keyword>
<keyword id="KW-0233">DNA recombination</keyword>
<keyword id="KW-0234">DNA repair</keyword>
<keyword id="KW-1017">Isopeptide bond</keyword>
<keyword id="KW-0539">Nucleus</keyword>
<keyword id="KW-0597">Phosphoprotein</keyword>
<keyword id="KW-1185">Reference proteome</keyword>
<keyword id="KW-0804">Transcription</keyword>
<keyword id="KW-0805">Transcription regulation</keyword>
<keyword id="KW-0832">Ubl conjugation</keyword>
<proteinExistence type="evidence at protein level"/>
<dbReference type="EMBL" id="AC103574">
    <property type="status" value="NOT_ANNOTATED_CDS"/>
    <property type="molecule type" value="Genomic_DNA"/>
</dbReference>
<dbReference type="EMBL" id="AB029495">
    <property type="protein sequence ID" value="BAA90702.1"/>
    <property type="molecule type" value="mRNA"/>
</dbReference>
<dbReference type="RefSeq" id="NP_620225.2">
    <property type="nucleotide sequence ID" value="NM_138870.2"/>
</dbReference>
<dbReference type="RefSeq" id="XP_006228098.1">
    <property type="nucleotide sequence ID" value="XM_006228036.3"/>
</dbReference>
<dbReference type="SMR" id="Q9JMG6"/>
<dbReference type="BioGRID" id="250095">
    <property type="interactions" value="2"/>
</dbReference>
<dbReference type="FunCoup" id="Q9JMG6">
    <property type="interactions" value="1254"/>
</dbReference>
<dbReference type="IntAct" id="Q9JMG6">
    <property type="interactions" value="1"/>
</dbReference>
<dbReference type="STRING" id="10116.ENSRNOP00000075123"/>
<dbReference type="GlyGen" id="Q9JMG6">
    <property type="glycosylation" value="1 site"/>
</dbReference>
<dbReference type="iPTMnet" id="Q9JMG6"/>
<dbReference type="PhosphoSitePlus" id="Q9JMG6"/>
<dbReference type="PaxDb" id="10116-ENSRNOP00000018913"/>
<dbReference type="Ensembl" id="ENSRNOT00000089713.2">
    <property type="protein sequence ID" value="ENSRNOP00000075123.2"/>
    <property type="gene ID" value="ENSRNOG00000056098.2"/>
</dbReference>
<dbReference type="GeneID" id="85423"/>
<dbReference type="KEGG" id="rno:85423"/>
<dbReference type="UCSC" id="RGD:620839">
    <property type="organism name" value="rat"/>
</dbReference>
<dbReference type="AGR" id="RGD:620839"/>
<dbReference type="CTD" id="29844"/>
<dbReference type="RGD" id="620839">
    <property type="gene designation" value="Tfpt"/>
</dbReference>
<dbReference type="eggNOG" id="ENOG502RHUP">
    <property type="taxonomic scope" value="Eukaryota"/>
</dbReference>
<dbReference type="GeneTree" id="ENSGT00390000016605"/>
<dbReference type="InParanoid" id="Q9JMG6"/>
<dbReference type="OMA" id="WRCKEIE"/>
<dbReference type="OrthoDB" id="10070927at2759"/>
<dbReference type="PhylomeDB" id="Q9JMG6"/>
<dbReference type="TreeFam" id="TF338152"/>
<dbReference type="Reactome" id="R-RNO-5689603">
    <property type="pathway name" value="UCH proteinases"/>
</dbReference>
<dbReference type="Reactome" id="R-RNO-5696394">
    <property type="pathway name" value="DNA Damage Recognition in GG-NER"/>
</dbReference>
<dbReference type="PRO" id="PR:Q9JMG6"/>
<dbReference type="Proteomes" id="UP000002494">
    <property type="component" value="Chromosome 1"/>
</dbReference>
<dbReference type="GO" id="GO:0005737">
    <property type="term" value="C:cytoplasm"/>
    <property type="evidence" value="ECO:0000314"/>
    <property type="project" value="UniProtKB"/>
</dbReference>
<dbReference type="GO" id="GO:0031011">
    <property type="term" value="C:Ino80 complex"/>
    <property type="evidence" value="ECO:0000266"/>
    <property type="project" value="RGD"/>
</dbReference>
<dbReference type="GO" id="GO:0005634">
    <property type="term" value="C:nucleus"/>
    <property type="evidence" value="ECO:0000314"/>
    <property type="project" value="UniProtKB"/>
</dbReference>
<dbReference type="GO" id="GO:0003677">
    <property type="term" value="F:DNA binding"/>
    <property type="evidence" value="ECO:0000314"/>
    <property type="project" value="UniProtKB"/>
</dbReference>
<dbReference type="GO" id="GO:0019901">
    <property type="term" value="F:protein kinase binding"/>
    <property type="evidence" value="ECO:0000353"/>
    <property type="project" value="UniProtKB"/>
</dbReference>
<dbReference type="GO" id="GO:0044877">
    <property type="term" value="F:protein-containing complex binding"/>
    <property type="evidence" value="ECO:0000314"/>
    <property type="project" value="RGD"/>
</dbReference>
<dbReference type="GO" id="GO:0006915">
    <property type="term" value="P:apoptotic process"/>
    <property type="evidence" value="ECO:0000314"/>
    <property type="project" value="UniProtKB"/>
</dbReference>
<dbReference type="GO" id="GO:0097190">
    <property type="term" value="P:apoptotic signaling pathway"/>
    <property type="evidence" value="ECO:0000266"/>
    <property type="project" value="RGD"/>
</dbReference>
<dbReference type="GO" id="GO:0006338">
    <property type="term" value="P:chromatin remodeling"/>
    <property type="evidence" value="ECO:0000266"/>
    <property type="project" value="RGD"/>
</dbReference>
<dbReference type="GO" id="GO:0006310">
    <property type="term" value="P:DNA recombination"/>
    <property type="evidence" value="ECO:0007669"/>
    <property type="project" value="UniProtKB-KW"/>
</dbReference>
<dbReference type="GO" id="GO:0006281">
    <property type="term" value="P:DNA repair"/>
    <property type="evidence" value="ECO:0007669"/>
    <property type="project" value="UniProtKB-KW"/>
</dbReference>
<dbReference type="GO" id="GO:0008584">
    <property type="term" value="P:male gonad development"/>
    <property type="evidence" value="ECO:0000270"/>
    <property type="project" value="RGD"/>
</dbReference>
<dbReference type="GO" id="GO:0043065">
    <property type="term" value="P:positive regulation of apoptotic process"/>
    <property type="evidence" value="ECO:0000314"/>
    <property type="project" value="RGD"/>
</dbReference>
<dbReference type="GO" id="GO:0045739">
    <property type="term" value="P:positive regulation of DNA repair"/>
    <property type="evidence" value="ECO:0000266"/>
    <property type="project" value="RGD"/>
</dbReference>
<dbReference type="GO" id="GO:0045893">
    <property type="term" value="P:positive regulation of DNA-templated transcription"/>
    <property type="evidence" value="ECO:0000266"/>
    <property type="project" value="RGD"/>
</dbReference>
<dbReference type="GO" id="GO:1904507">
    <property type="term" value="P:positive regulation of telomere maintenance in response to DNA damage"/>
    <property type="evidence" value="ECO:0000266"/>
    <property type="project" value="RGD"/>
</dbReference>
<dbReference type="GO" id="GO:0051726">
    <property type="term" value="P:regulation of cell cycle"/>
    <property type="evidence" value="ECO:0000266"/>
    <property type="project" value="RGD"/>
</dbReference>
<dbReference type="GO" id="GO:0033044">
    <property type="term" value="P:regulation of chromosome organization"/>
    <property type="evidence" value="ECO:0000266"/>
    <property type="project" value="RGD"/>
</dbReference>
<dbReference type="GO" id="GO:0006282">
    <property type="term" value="P:regulation of DNA repair"/>
    <property type="evidence" value="ECO:0000266"/>
    <property type="project" value="RGD"/>
</dbReference>
<dbReference type="GO" id="GO:0006275">
    <property type="term" value="P:regulation of DNA replication"/>
    <property type="evidence" value="ECO:0000266"/>
    <property type="project" value="RGD"/>
</dbReference>
<dbReference type="GO" id="GO:0060382">
    <property type="term" value="P:regulation of DNA strand elongation"/>
    <property type="evidence" value="ECO:0000266"/>
    <property type="project" value="RGD"/>
</dbReference>
<dbReference type="GO" id="GO:0045995">
    <property type="term" value="P:regulation of embryonic development"/>
    <property type="evidence" value="ECO:0000266"/>
    <property type="project" value="RGD"/>
</dbReference>
<dbReference type="GO" id="GO:0000723">
    <property type="term" value="P:telomere maintenance"/>
    <property type="evidence" value="ECO:0000266"/>
    <property type="project" value="RGD"/>
</dbReference>
<dbReference type="InterPro" id="IPR056513">
    <property type="entry name" value="INO80F"/>
</dbReference>
<dbReference type="InterPro" id="IPR033555">
    <property type="entry name" value="TFPT"/>
</dbReference>
<dbReference type="PANTHER" id="PTHR35084">
    <property type="entry name" value="TCF3 FUSION PARTNER"/>
    <property type="match status" value="1"/>
</dbReference>
<dbReference type="PANTHER" id="PTHR35084:SF1">
    <property type="entry name" value="TCF3 FUSION PARTNER"/>
    <property type="match status" value="1"/>
</dbReference>
<dbReference type="Pfam" id="PF24245">
    <property type="entry name" value="INO80F"/>
    <property type="match status" value="1"/>
</dbReference>
<sequence length="259" mass="28908">MELEQREGTMAAVGFEEFSAPPGSELALPPLFGGHILESELETEVEFVSGGLGDSGLRERDEEEEAARGRRRRQRELNRRKYQALGRRCREIEQVNERVLNRLHQVQRITRRLQQERRFLMRVLDSYGDDYRDSQFTIVLEDDGSQGTDVPTPGNVENEPPEKEGLSPPQRTTATLDPSSPAPGEGPSGRKRRRAPRAASSLTPELAPVQVGAEGWGQGVIKVEEDFGFEADEALDSSWVSRGPDKLLPYPTLASPPFD</sequence>
<accession>Q9JMG6</accession>
<evidence type="ECO:0000250" key="1"/>
<evidence type="ECO:0000250" key="2">
    <source>
        <dbReference type="UniProtKB" id="P0C1Z6"/>
    </source>
</evidence>
<evidence type="ECO:0000256" key="3">
    <source>
        <dbReference type="SAM" id="MobiDB-lite"/>
    </source>
</evidence>
<evidence type="ECO:0000269" key="4">
    <source>
    </source>
</evidence>
<evidence type="ECO:0007744" key="5">
    <source>
    </source>
</evidence>
<gene>
    <name type="primary">Tfpt</name>
    <name type="synonym">Amida</name>
</gene>
<protein>
    <recommendedName>
        <fullName>TCF3 fusion partner homolog</fullName>
    </recommendedName>
    <alternativeName>
        <fullName>Protein amida</fullName>
    </alternativeName>
</protein>
<comment type="function">
    <text>Appears to promote apoptosis in a p53/TP53-independent manner.</text>
</comment>
<comment type="function">
    <text evidence="1">Putative regulatory component of the chromatin remodeling INO80 complex which is involved in transcriptional regulation, DNA replication and probably DNA repair.</text>
</comment>
<comment type="subunit">
    <text evidence="1 4">Interacts with NOL3; translocates NOL3 into the nucleus and negatively regulated TFPT-induced cell death. Component of the chromatin remodeling INO80 complex; specifically part of a complex module associated with the N-terminus of INO80 (By similarity).</text>
</comment>
<comment type="interaction">
    <interactant intactId="EBI-1767101">
        <id>Q9JMG6</id>
    </interactant>
    <interactant intactId="EBI-1187240">
        <id>Q62627</id>
        <label>Pawr</label>
    </interactant>
    <organismsDiffer>false</organismsDiffer>
    <experiments>8</experiments>
</comment>
<comment type="subcellular location">
    <subcellularLocation>
        <location evidence="4">Nucleus</location>
    </subcellularLocation>
</comment>
<comment type="tissue specificity">
    <text evidence="4">Ubiquitously expressed. Abundant in the brain.</text>
</comment>
<feature type="chain" id="PRO_0000254583" description="TCF3 fusion partner homolog">
    <location>
        <begin position="1"/>
        <end position="259"/>
    </location>
</feature>
<feature type="region of interest" description="Disordered" evidence="3">
    <location>
        <begin position="51"/>
        <end position="72"/>
    </location>
</feature>
<feature type="region of interest" description="Disordered" evidence="3">
    <location>
        <begin position="141"/>
        <end position="210"/>
    </location>
</feature>
<feature type="region of interest" description="Disordered" evidence="3">
    <location>
        <begin position="240"/>
        <end position="259"/>
    </location>
</feature>
<feature type="modified residue" description="Phosphoserine" evidence="2">
    <location>
        <position position="167"/>
    </location>
</feature>
<feature type="modified residue" description="Phosphothreonine" evidence="2">
    <location>
        <position position="172"/>
    </location>
</feature>
<feature type="modified residue" description="Phosphoserine" evidence="5">
    <location>
        <position position="180"/>
    </location>
</feature>
<feature type="modified residue" description="Phosphoserine" evidence="2">
    <location>
        <position position="188"/>
    </location>
</feature>
<feature type="modified residue" description="Phosphothreonine" evidence="2">
    <location>
        <position position="203"/>
    </location>
</feature>
<feature type="modified residue" description="Phosphoserine" evidence="2">
    <location>
        <position position="255"/>
    </location>
</feature>
<feature type="cross-link" description="Glycyl lysine isopeptide (Lys-Gly) (interchain with G-Cter in SUMO2)" evidence="2">
    <location>
        <position position="222"/>
    </location>
</feature>
<name>TFPT_RAT</name>
<organism>
    <name type="scientific">Rattus norvegicus</name>
    <name type="common">Rat</name>
    <dbReference type="NCBI Taxonomy" id="10116"/>
    <lineage>
        <taxon>Eukaryota</taxon>
        <taxon>Metazoa</taxon>
        <taxon>Chordata</taxon>
        <taxon>Craniata</taxon>
        <taxon>Vertebrata</taxon>
        <taxon>Euteleostomi</taxon>
        <taxon>Mammalia</taxon>
        <taxon>Eutheria</taxon>
        <taxon>Euarchontoglires</taxon>
        <taxon>Glires</taxon>
        <taxon>Rodentia</taxon>
        <taxon>Myomorpha</taxon>
        <taxon>Muroidea</taxon>
        <taxon>Muridae</taxon>
        <taxon>Murinae</taxon>
        <taxon>Rattus</taxon>
    </lineage>
</organism>
<reference key="1">
    <citation type="journal article" date="2004" name="Nature">
        <title>Genome sequence of the Brown Norway rat yields insights into mammalian evolution.</title>
        <authorList>
            <person name="Gibbs R.A."/>
            <person name="Weinstock G.M."/>
            <person name="Metzker M.L."/>
            <person name="Muzny D.M."/>
            <person name="Sodergren E.J."/>
            <person name="Scherer S."/>
            <person name="Scott G."/>
            <person name="Steffen D."/>
            <person name="Worley K.C."/>
            <person name="Burch P.E."/>
            <person name="Okwuonu G."/>
            <person name="Hines S."/>
            <person name="Lewis L."/>
            <person name="Deramo C."/>
            <person name="Delgado O."/>
            <person name="Dugan-Rocha S."/>
            <person name="Miner G."/>
            <person name="Morgan M."/>
            <person name="Hawes A."/>
            <person name="Gill R."/>
            <person name="Holt R.A."/>
            <person name="Adams M.D."/>
            <person name="Amanatides P.G."/>
            <person name="Baden-Tillson H."/>
            <person name="Barnstead M."/>
            <person name="Chin S."/>
            <person name="Evans C.A."/>
            <person name="Ferriera S."/>
            <person name="Fosler C."/>
            <person name="Glodek A."/>
            <person name="Gu Z."/>
            <person name="Jennings D."/>
            <person name="Kraft C.L."/>
            <person name="Nguyen T."/>
            <person name="Pfannkoch C.M."/>
            <person name="Sitter C."/>
            <person name="Sutton G.G."/>
            <person name="Venter J.C."/>
            <person name="Woodage T."/>
            <person name="Smith D."/>
            <person name="Lee H.-M."/>
            <person name="Gustafson E."/>
            <person name="Cahill P."/>
            <person name="Kana A."/>
            <person name="Doucette-Stamm L."/>
            <person name="Weinstock K."/>
            <person name="Fechtel K."/>
            <person name="Weiss R.B."/>
            <person name="Dunn D.M."/>
            <person name="Green E.D."/>
            <person name="Blakesley R.W."/>
            <person name="Bouffard G.G."/>
            <person name="De Jong P.J."/>
            <person name="Osoegawa K."/>
            <person name="Zhu B."/>
            <person name="Marra M."/>
            <person name="Schein J."/>
            <person name="Bosdet I."/>
            <person name="Fjell C."/>
            <person name="Jones S."/>
            <person name="Krzywinski M."/>
            <person name="Mathewson C."/>
            <person name="Siddiqui A."/>
            <person name="Wye N."/>
            <person name="McPherson J."/>
            <person name="Zhao S."/>
            <person name="Fraser C.M."/>
            <person name="Shetty J."/>
            <person name="Shatsman S."/>
            <person name="Geer K."/>
            <person name="Chen Y."/>
            <person name="Abramzon S."/>
            <person name="Nierman W.C."/>
            <person name="Havlak P.H."/>
            <person name="Chen R."/>
            <person name="Durbin K.J."/>
            <person name="Egan A."/>
            <person name="Ren Y."/>
            <person name="Song X.-Z."/>
            <person name="Li B."/>
            <person name="Liu Y."/>
            <person name="Qin X."/>
            <person name="Cawley S."/>
            <person name="Cooney A.J."/>
            <person name="D'Souza L.M."/>
            <person name="Martin K."/>
            <person name="Wu J.Q."/>
            <person name="Gonzalez-Garay M.L."/>
            <person name="Jackson A.R."/>
            <person name="Kalafus K.J."/>
            <person name="McLeod M.P."/>
            <person name="Milosavljevic A."/>
            <person name="Virk D."/>
            <person name="Volkov A."/>
            <person name="Wheeler D.A."/>
            <person name="Zhang Z."/>
            <person name="Bailey J.A."/>
            <person name="Eichler E.E."/>
            <person name="Tuzun E."/>
            <person name="Birney E."/>
            <person name="Mongin E."/>
            <person name="Ureta-Vidal A."/>
            <person name="Woodwark C."/>
            <person name="Zdobnov E."/>
            <person name="Bork P."/>
            <person name="Suyama M."/>
            <person name="Torrents D."/>
            <person name="Alexandersson M."/>
            <person name="Trask B.J."/>
            <person name="Young J.M."/>
            <person name="Huang H."/>
            <person name="Wang H."/>
            <person name="Xing H."/>
            <person name="Daniels S."/>
            <person name="Gietzen D."/>
            <person name="Schmidt J."/>
            <person name="Stevens K."/>
            <person name="Vitt U."/>
            <person name="Wingrove J."/>
            <person name="Camara F."/>
            <person name="Mar Alba M."/>
            <person name="Abril J.F."/>
            <person name="Guigo R."/>
            <person name="Smit A."/>
            <person name="Dubchak I."/>
            <person name="Rubin E.M."/>
            <person name="Couronne O."/>
            <person name="Poliakov A."/>
            <person name="Huebner N."/>
            <person name="Ganten D."/>
            <person name="Goesele C."/>
            <person name="Hummel O."/>
            <person name="Kreitler T."/>
            <person name="Lee Y.-A."/>
            <person name="Monti J."/>
            <person name="Schulz H."/>
            <person name="Zimdahl H."/>
            <person name="Himmelbauer H."/>
            <person name="Lehrach H."/>
            <person name="Jacob H.J."/>
            <person name="Bromberg S."/>
            <person name="Gullings-Handley J."/>
            <person name="Jensen-Seaman M.I."/>
            <person name="Kwitek A.E."/>
            <person name="Lazar J."/>
            <person name="Pasko D."/>
            <person name="Tonellato P.J."/>
            <person name="Twigger S."/>
            <person name="Ponting C.P."/>
            <person name="Duarte J.M."/>
            <person name="Rice S."/>
            <person name="Goodstadt L."/>
            <person name="Beatson S.A."/>
            <person name="Emes R.D."/>
            <person name="Winter E.E."/>
            <person name="Webber C."/>
            <person name="Brandt P."/>
            <person name="Nyakatura G."/>
            <person name="Adetobi M."/>
            <person name="Chiaromonte F."/>
            <person name="Elnitski L."/>
            <person name="Eswara P."/>
            <person name="Hardison R.C."/>
            <person name="Hou M."/>
            <person name="Kolbe D."/>
            <person name="Makova K."/>
            <person name="Miller W."/>
            <person name="Nekrutenko A."/>
            <person name="Riemer C."/>
            <person name="Schwartz S."/>
            <person name="Taylor J."/>
            <person name="Yang S."/>
            <person name="Zhang Y."/>
            <person name="Lindpaintner K."/>
            <person name="Andrews T.D."/>
            <person name="Caccamo M."/>
            <person name="Clamp M."/>
            <person name="Clarke L."/>
            <person name="Curwen V."/>
            <person name="Durbin R.M."/>
            <person name="Eyras E."/>
            <person name="Searle S.M."/>
            <person name="Cooper G.M."/>
            <person name="Batzoglou S."/>
            <person name="Brudno M."/>
            <person name="Sidow A."/>
            <person name="Stone E.A."/>
            <person name="Payseur B.A."/>
            <person name="Bourque G."/>
            <person name="Lopez-Otin C."/>
            <person name="Puente X.S."/>
            <person name="Chakrabarti K."/>
            <person name="Chatterji S."/>
            <person name="Dewey C."/>
            <person name="Pachter L."/>
            <person name="Bray N."/>
            <person name="Yap V.B."/>
            <person name="Caspi A."/>
            <person name="Tesler G."/>
            <person name="Pevzner P.A."/>
            <person name="Haussler D."/>
            <person name="Roskin K.M."/>
            <person name="Baertsch R."/>
            <person name="Clawson H."/>
            <person name="Furey T.S."/>
            <person name="Hinrichs A.S."/>
            <person name="Karolchik D."/>
            <person name="Kent W.J."/>
            <person name="Rosenbloom K.R."/>
            <person name="Trumbower H."/>
            <person name="Weirauch M."/>
            <person name="Cooper D.N."/>
            <person name="Stenson P.D."/>
            <person name="Ma B."/>
            <person name="Brent M."/>
            <person name="Arumugam M."/>
            <person name="Shteynberg D."/>
            <person name="Copley R.R."/>
            <person name="Taylor M.S."/>
            <person name="Riethman H."/>
            <person name="Mudunuri U."/>
            <person name="Peterson J."/>
            <person name="Guyer M."/>
            <person name="Felsenfeld A."/>
            <person name="Old S."/>
            <person name="Mockrin S."/>
            <person name="Collins F.S."/>
        </authorList>
    </citation>
    <scope>NUCLEOTIDE SEQUENCE [LARGE SCALE GENOMIC DNA]</scope>
    <source>
        <strain>Brown Norway</strain>
    </source>
</reference>
<reference key="2">
    <citation type="journal article" date="2000" name="J. Biol. Chem.">
        <title>Molecular cloning and characterization of Amida, a novel protein which interacts with a neuron-specific immediate early gene product arc, contains novel nuclear localization signals, and causes cell death in cultured cells.</title>
        <authorList>
            <person name="Irie Y."/>
            <person name="Yamagata K."/>
            <person name="Gan Y."/>
            <person name="Miyamoto K."/>
            <person name="Do E."/>
            <person name="Kuo C.H."/>
            <person name="Taira E."/>
            <person name="Miki N."/>
        </authorList>
    </citation>
    <scope>NUCLEOTIDE SEQUENCE [MRNA] OF 10-259</scope>
    <scope>SUBCELLULAR LOCATION</scope>
    <scope>TISSUE SPECIFICITY</scope>
    <scope>POSSIBLE FUNCTION IN APOPTOSIS</scope>
    <scope>INTERACTION WITH NOL3</scope>
</reference>
<reference key="3">
    <citation type="journal article" date="2012" name="Nat. Commun.">
        <title>Quantitative maps of protein phosphorylation sites across 14 different rat organs and tissues.</title>
        <authorList>
            <person name="Lundby A."/>
            <person name="Secher A."/>
            <person name="Lage K."/>
            <person name="Nordsborg N.B."/>
            <person name="Dmytriyev A."/>
            <person name="Lundby C."/>
            <person name="Olsen J.V."/>
        </authorList>
    </citation>
    <scope>PHOSPHORYLATION [LARGE SCALE ANALYSIS] AT SER-180</scope>
    <scope>IDENTIFICATION BY MASS SPECTROMETRY [LARGE SCALE ANALYSIS]</scope>
</reference>